<dbReference type="EMBL" id="CP001083">
    <property type="protein sequence ID" value="ACQ53507.1"/>
    <property type="molecule type" value="Genomic_DNA"/>
</dbReference>
<dbReference type="RefSeq" id="WP_004441542.1">
    <property type="nucleotide sequence ID" value="NC_012658.1"/>
</dbReference>
<dbReference type="SMR" id="C3L117"/>
<dbReference type="KEGG" id="cbi:CLJ_B2760"/>
<dbReference type="HOGENOM" id="CLU_108412_0_0_9"/>
<dbReference type="Proteomes" id="UP000002333">
    <property type="component" value="Chromosome"/>
</dbReference>
<dbReference type="GO" id="GO:0005524">
    <property type="term" value="F:ATP binding"/>
    <property type="evidence" value="ECO:0007669"/>
    <property type="project" value="UniProtKB-KW"/>
</dbReference>
<dbReference type="GO" id="GO:0003677">
    <property type="term" value="F:DNA binding"/>
    <property type="evidence" value="ECO:0007669"/>
    <property type="project" value="UniProtKB-KW"/>
</dbReference>
<dbReference type="GO" id="GO:0008270">
    <property type="term" value="F:zinc ion binding"/>
    <property type="evidence" value="ECO:0007669"/>
    <property type="project" value="UniProtKB-UniRule"/>
</dbReference>
<dbReference type="GO" id="GO:0045892">
    <property type="term" value="P:negative regulation of DNA-templated transcription"/>
    <property type="evidence" value="ECO:0007669"/>
    <property type="project" value="UniProtKB-UniRule"/>
</dbReference>
<dbReference type="HAMAP" id="MF_00440">
    <property type="entry name" value="NrdR"/>
    <property type="match status" value="1"/>
</dbReference>
<dbReference type="InterPro" id="IPR005144">
    <property type="entry name" value="ATP-cone_dom"/>
</dbReference>
<dbReference type="InterPro" id="IPR055173">
    <property type="entry name" value="NrdR-like_N"/>
</dbReference>
<dbReference type="InterPro" id="IPR003796">
    <property type="entry name" value="RNR_NrdR-like"/>
</dbReference>
<dbReference type="NCBIfam" id="TIGR00244">
    <property type="entry name" value="transcriptional regulator NrdR"/>
    <property type="match status" value="1"/>
</dbReference>
<dbReference type="PANTHER" id="PTHR30455">
    <property type="entry name" value="TRANSCRIPTIONAL REPRESSOR NRDR"/>
    <property type="match status" value="1"/>
</dbReference>
<dbReference type="PANTHER" id="PTHR30455:SF2">
    <property type="entry name" value="TRANSCRIPTIONAL REPRESSOR NRDR"/>
    <property type="match status" value="1"/>
</dbReference>
<dbReference type="Pfam" id="PF03477">
    <property type="entry name" value="ATP-cone"/>
    <property type="match status" value="1"/>
</dbReference>
<dbReference type="Pfam" id="PF22811">
    <property type="entry name" value="Zn_ribbon_NrdR"/>
    <property type="match status" value="1"/>
</dbReference>
<dbReference type="PROSITE" id="PS51161">
    <property type="entry name" value="ATP_CONE"/>
    <property type="match status" value="1"/>
</dbReference>
<evidence type="ECO:0000255" key="1">
    <source>
        <dbReference type="HAMAP-Rule" id="MF_00440"/>
    </source>
</evidence>
<proteinExistence type="inferred from homology"/>
<accession>C3L117</accession>
<organism>
    <name type="scientific">Clostridium botulinum (strain 657 / Type Ba4)</name>
    <dbReference type="NCBI Taxonomy" id="515621"/>
    <lineage>
        <taxon>Bacteria</taxon>
        <taxon>Bacillati</taxon>
        <taxon>Bacillota</taxon>
        <taxon>Clostridia</taxon>
        <taxon>Eubacteriales</taxon>
        <taxon>Clostridiaceae</taxon>
        <taxon>Clostridium</taxon>
    </lineage>
</organism>
<reference key="1">
    <citation type="submission" date="2008-05" db="EMBL/GenBank/DDBJ databases">
        <title>Genome sequence of Clostridium botulinum Ba4 strain 657.</title>
        <authorList>
            <person name="Shrivastava S."/>
            <person name="Brown J.L."/>
            <person name="Bruce D."/>
            <person name="Detter C."/>
            <person name="Munk C."/>
            <person name="Smith L.A."/>
            <person name="Smith T.J."/>
            <person name="Sutton G."/>
            <person name="Brettin T.S."/>
        </authorList>
    </citation>
    <scope>NUCLEOTIDE SEQUENCE [LARGE SCALE GENOMIC DNA]</scope>
    <source>
        <strain>657 / Type Ba4</strain>
    </source>
</reference>
<comment type="function">
    <text evidence="1">Negatively regulates transcription of bacterial ribonucleotide reductase nrd genes and operons by binding to NrdR-boxes.</text>
</comment>
<comment type="cofactor">
    <cofactor evidence="1">
        <name>Zn(2+)</name>
        <dbReference type="ChEBI" id="CHEBI:29105"/>
    </cofactor>
    <text evidence="1">Binds 1 zinc ion.</text>
</comment>
<comment type="similarity">
    <text evidence="1">Belongs to the NrdR family.</text>
</comment>
<protein>
    <recommendedName>
        <fullName evidence="1">Transcriptional repressor NrdR</fullName>
    </recommendedName>
</protein>
<name>NRDR_CLOB6</name>
<sequence>MKCPYCAYGESKVVDSRSTEDGSSIRRRRECLKCNRRYTTYEKIETTPILVIKKNMSREYFDRNKMVNGLMKACQKRPVSRKQIEQIADEVERHISNEMLTEVNTDKIGQIIMKNLKKIDEVSYVRFASVYRQFKDINTFMEEIKNLMDKN</sequence>
<gene>
    <name evidence="1" type="primary">nrdR</name>
    <name type="ordered locus">CLJ_B2760</name>
</gene>
<keyword id="KW-0067">ATP-binding</keyword>
<keyword id="KW-0238">DNA-binding</keyword>
<keyword id="KW-0479">Metal-binding</keyword>
<keyword id="KW-0547">Nucleotide-binding</keyword>
<keyword id="KW-0678">Repressor</keyword>
<keyword id="KW-0804">Transcription</keyword>
<keyword id="KW-0805">Transcription regulation</keyword>
<keyword id="KW-0862">Zinc</keyword>
<keyword id="KW-0863">Zinc-finger</keyword>
<feature type="chain" id="PRO_1000206110" description="Transcriptional repressor NrdR">
    <location>
        <begin position="1"/>
        <end position="151"/>
    </location>
</feature>
<feature type="domain" description="ATP-cone" evidence="1">
    <location>
        <begin position="49"/>
        <end position="139"/>
    </location>
</feature>
<feature type="zinc finger region" evidence="1">
    <location>
        <begin position="3"/>
        <end position="34"/>
    </location>
</feature>